<name>D19L1_HUMAN</name>
<reference key="1">
    <citation type="submission" date="2005-11" db="EMBL/GenBank/DDBJ databases">
        <title>The Centre for Applied Genomics chromosome 7 annotation project.</title>
        <authorList>
            <person name="Carson A.R."/>
            <person name="Cheung J."/>
            <person name="Scherer S.W."/>
        </authorList>
    </citation>
    <scope>NUCLEOTIDE SEQUENCE [LARGE SCALE MRNA] (ISOFORM 1)</scope>
</reference>
<reference key="2">
    <citation type="journal article" date="2004" name="Genome Res.">
        <title>The status, quality, and expansion of the NIH full-length cDNA project: the Mammalian Gene Collection (MGC).</title>
        <authorList>
            <consortium name="The MGC Project Team"/>
        </authorList>
    </citation>
    <scope>NUCLEOTIDE SEQUENCE [LARGE SCALE MRNA] (ISOFORM 2)</scope>
    <source>
        <tissue>Testis</tissue>
    </source>
</reference>
<reference key="3">
    <citation type="journal article" date="1998" name="DNA Res.">
        <title>Prediction of the coding sequences of unidentified human genes. XII. The complete sequences of 100 new cDNA clones from brain which code for large proteins in vitro.</title>
        <authorList>
            <person name="Nagase T."/>
            <person name="Ishikawa K."/>
            <person name="Suyama M."/>
            <person name="Kikuno R."/>
            <person name="Hirosawa M."/>
            <person name="Miyajima N."/>
            <person name="Tanaka A."/>
            <person name="Kotani H."/>
            <person name="Nomura N."/>
            <person name="Ohara O."/>
        </authorList>
    </citation>
    <scope>NUCLEOTIDE SEQUENCE [LARGE SCALE MRNA] OF 96-675 (ISOFORM 1)</scope>
    <source>
        <tissue>Brain</tissue>
    </source>
</reference>
<reference key="4">
    <citation type="journal article" date="2006" name="BMC Genomics">
        <title>Duplication and relocation of the functional DPY19L2 gene within low copy repeats.</title>
        <authorList>
            <person name="Carson A.R."/>
            <person name="Cheung J."/>
            <person name="Scherer S.W."/>
        </authorList>
    </citation>
    <scope>GENE DUPLICATION</scope>
    <scope>TISSUE SPECIFICITY</scope>
</reference>
<dbReference type="EC" id="2.4.1.-" evidence="1"/>
<dbReference type="EMBL" id="DQ287932">
    <property type="protein sequence ID" value="ABB89208.1"/>
    <property type="molecule type" value="mRNA"/>
</dbReference>
<dbReference type="EMBL" id="BC029591">
    <property type="protein sequence ID" value="AAH29591.1"/>
    <property type="molecule type" value="mRNA"/>
</dbReference>
<dbReference type="EMBL" id="AB020684">
    <property type="protein sequence ID" value="BAA74900.1"/>
    <property type="molecule type" value="mRNA"/>
</dbReference>
<dbReference type="CCDS" id="CCDS43567.1">
    <molecule id="Q2PZI1-1"/>
</dbReference>
<dbReference type="RefSeq" id="NP_056098.1">
    <molecule id="Q2PZI1-1"/>
    <property type="nucleotide sequence ID" value="NM_015283.2"/>
</dbReference>
<dbReference type="SMR" id="Q2PZI1"/>
<dbReference type="BioGRID" id="116920">
    <property type="interactions" value="101"/>
</dbReference>
<dbReference type="FunCoup" id="Q2PZI1">
    <property type="interactions" value="1345"/>
</dbReference>
<dbReference type="IntAct" id="Q2PZI1">
    <property type="interactions" value="57"/>
</dbReference>
<dbReference type="MINT" id="Q2PZI1"/>
<dbReference type="STRING" id="9606.ENSP00000308695"/>
<dbReference type="GlyGen" id="Q2PZI1">
    <property type="glycosylation" value="1 site, 1 O-linked glycan (1 site)"/>
</dbReference>
<dbReference type="iPTMnet" id="Q2PZI1"/>
<dbReference type="PhosphoSitePlus" id="Q2PZI1"/>
<dbReference type="SwissPalm" id="Q2PZI1"/>
<dbReference type="BioMuta" id="DPY19L1"/>
<dbReference type="DMDM" id="121941680"/>
<dbReference type="jPOST" id="Q2PZI1"/>
<dbReference type="MassIVE" id="Q2PZI1"/>
<dbReference type="PaxDb" id="9606-ENSP00000308695"/>
<dbReference type="PeptideAtlas" id="Q2PZI1"/>
<dbReference type="ProteomicsDB" id="61434">
    <molecule id="Q2PZI1-1"/>
</dbReference>
<dbReference type="ProteomicsDB" id="61435">
    <molecule id="Q2PZI1-2"/>
</dbReference>
<dbReference type="Pumba" id="Q2PZI1"/>
<dbReference type="Antibodypedia" id="53188">
    <property type="antibodies" value="145 antibodies from 18 providers"/>
</dbReference>
<dbReference type="DNASU" id="23333"/>
<dbReference type="Ensembl" id="ENST00000310974.8">
    <molecule id="Q2PZI1-1"/>
    <property type="protein sequence ID" value="ENSP00000308695.4"/>
    <property type="gene ID" value="ENSG00000173852.16"/>
</dbReference>
<dbReference type="GeneID" id="23333"/>
<dbReference type="KEGG" id="hsa:23333"/>
<dbReference type="UCSC" id="uc003tem.5">
    <molecule id="Q2PZI1-1"/>
    <property type="organism name" value="human"/>
</dbReference>
<dbReference type="AGR" id="HGNC:22205"/>
<dbReference type="CTD" id="23333"/>
<dbReference type="DisGeNET" id="23333"/>
<dbReference type="GeneCards" id="DPY19L1"/>
<dbReference type="HGNC" id="HGNC:22205">
    <property type="gene designation" value="DPY19L1"/>
</dbReference>
<dbReference type="HPA" id="ENSG00000173852">
    <property type="expression patterns" value="Low tissue specificity"/>
</dbReference>
<dbReference type="MIM" id="613892">
    <property type="type" value="gene"/>
</dbReference>
<dbReference type="neXtProt" id="NX_Q2PZI1"/>
<dbReference type="OpenTargets" id="ENSG00000173852"/>
<dbReference type="PharmGKB" id="PA142671946"/>
<dbReference type="VEuPathDB" id="HostDB:ENSG00000173852"/>
<dbReference type="eggNOG" id="KOG4587">
    <property type="taxonomic scope" value="Eukaryota"/>
</dbReference>
<dbReference type="GeneTree" id="ENSGT00530000063023"/>
<dbReference type="HOGENOM" id="CLU_014404_0_1_1"/>
<dbReference type="InParanoid" id="Q2PZI1"/>
<dbReference type="OrthoDB" id="6019623at2759"/>
<dbReference type="PAN-GO" id="Q2PZI1">
    <property type="GO annotations" value="3 GO annotations based on evolutionary models"/>
</dbReference>
<dbReference type="PhylomeDB" id="Q2PZI1"/>
<dbReference type="TreeFam" id="TF313376"/>
<dbReference type="PathwayCommons" id="Q2PZI1"/>
<dbReference type="SignaLink" id="Q2PZI1"/>
<dbReference type="UniPathway" id="UPA00378"/>
<dbReference type="BioGRID-ORCS" id="23333">
    <property type="hits" value="14 hits in 1149 CRISPR screens"/>
</dbReference>
<dbReference type="ChiTaRS" id="DPY19L1">
    <property type="organism name" value="human"/>
</dbReference>
<dbReference type="GenomeRNAi" id="23333"/>
<dbReference type="Pharos" id="Q2PZI1">
    <property type="development level" value="Tbio"/>
</dbReference>
<dbReference type="PRO" id="PR:Q2PZI1"/>
<dbReference type="Proteomes" id="UP000005640">
    <property type="component" value="Chromosome 7"/>
</dbReference>
<dbReference type="RNAct" id="Q2PZI1">
    <property type="molecule type" value="protein"/>
</dbReference>
<dbReference type="Bgee" id="ENSG00000173852">
    <property type="expression patterns" value="Expressed in ganglionic eminence and 206 other cell types or tissues"/>
</dbReference>
<dbReference type="ExpressionAtlas" id="Q2PZI1">
    <property type="expression patterns" value="baseline and differential"/>
</dbReference>
<dbReference type="GO" id="GO:0005789">
    <property type="term" value="C:endoplasmic reticulum membrane"/>
    <property type="evidence" value="ECO:0000318"/>
    <property type="project" value="GO_Central"/>
</dbReference>
<dbReference type="GO" id="GO:0016020">
    <property type="term" value="C:membrane"/>
    <property type="evidence" value="ECO:0007005"/>
    <property type="project" value="UniProtKB"/>
</dbReference>
<dbReference type="GO" id="GO:0000030">
    <property type="term" value="F:mannosyltransferase activity"/>
    <property type="evidence" value="ECO:0000318"/>
    <property type="project" value="GO_Central"/>
</dbReference>
<dbReference type="GO" id="GO:0006486">
    <property type="term" value="P:protein glycosylation"/>
    <property type="evidence" value="ECO:0007669"/>
    <property type="project" value="UniProtKB-UniPathway"/>
</dbReference>
<dbReference type="CDD" id="cd20178">
    <property type="entry name" value="Dpy19L1"/>
    <property type="match status" value="1"/>
</dbReference>
<dbReference type="InterPro" id="IPR018732">
    <property type="entry name" value="Dpy-19/Dpy-19-like"/>
</dbReference>
<dbReference type="InterPro" id="IPR047463">
    <property type="entry name" value="Dpy19L1"/>
</dbReference>
<dbReference type="PANTHER" id="PTHR31488:SF5">
    <property type="entry name" value="C-MANNOSYLTRANSFERASE DPY19L1-RELATED"/>
    <property type="match status" value="1"/>
</dbReference>
<dbReference type="PANTHER" id="PTHR31488">
    <property type="entry name" value="DPY-19-LIKE 1, LIKE (H. SAPIENS)"/>
    <property type="match status" value="1"/>
</dbReference>
<dbReference type="Pfam" id="PF10034">
    <property type="entry name" value="Dpy19"/>
    <property type="match status" value="1"/>
</dbReference>
<evidence type="ECO:0000250" key="1">
    <source>
        <dbReference type="UniProtKB" id="A6X919"/>
    </source>
</evidence>
<evidence type="ECO:0000255" key="2"/>
<evidence type="ECO:0000256" key="3">
    <source>
        <dbReference type="SAM" id="MobiDB-lite"/>
    </source>
</evidence>
<evidence type="ECO:0000269" key="4">
    <source>
    </source>
</evidence>
<evidence type="ECO:0000303" key="5">
    <source>
    </source>
</evidence>
<evidence type="ECO:0000305" key="6"/>
<protein>
    <recommendedName>
        <fullName>Protein C-mannosyl-transferase DPY19L1</fullName>
        <ecNumber evidence="1">2.4.1.-</ecNumber>
    </recommendedName>
    <alternativeName>
        <fullName>Dpy-19-like protein 1</fullName>
    </alternativeName>
    <alternativeName>
        <fullName>Protein dpy-19 homolog 1</fullName>
    </alternativeName>
</protein>
<gene>
    <name type="primary">DPY19L1</name>
    <name type="synonym">GA0500</name>
    <name type="synonym">KIAA0877</name>
</gene>
<organism>
    <name type="scientific">Homo sapiens</name>
    <name type="common">Human</name>
    <dbReference type="NCBI Taxonomy" id="9606"/>
    <lineage>
        <taxon>Eukaryota</taxon>
        <taxon>Metazoa</taxon>
        <taxon>Chordata</taxon>
        <taxon>Craniata</taxon>
        <taxon>Vertebrata</taxon>
        <taxon>Euteleostomi</taxon>
        <taxon>Mammalia</taxon>
        <taxon>Eutheria</taxon>
        <taxon>Euarchontoglires</taxon>
        <taxon>Primates</taxon>
        <taxon>Haplorrhini</taxon>
        <taxon>Catarrhini</taxon>
        <taxon>Hominidae</taxon>
        <taxon>Homo</taxon>
    </lineage>
</organism>
<feature type="chain" id="PRO_0000311877" description="Protein C-mannosyl-transferase DPY19L1">
    <location>
        <begin position="1"/>
        <end position="675"/>
    </location>
</feature>
<feature type="transmembrane region" description="Helical" evidence="2">
    <location>
        <begin position="66"/>
        <end position="88"/>
    </location>
</feature>
<feature type="transmembrane region" description="Helical" evidence="2">
    <location>
        <begin position="156"/>
        <end position="176"/>
    </location>
</feature>
<feature type="transmembrane region" description="Helical" evidence="2">
    <location>
        <begin position="186"/>
        <end position="208"/>
    </location>
</feature>
<feature type="transmembrane region" description="Helical" evidence="2">
    <location>
        <begin position="236"/>
        <end position="254"/>
    </location>
</feature>
<feature type="transmembrane region" description="Helical" evidence="2">
    <location>
        <begin position="260"/>
        <end position="279"/>
    </location>
</feature>
<feature type="transmembrane region" description="Helical" evidence="2">
    <location>
        <begin position="286"/>
        <end position="303"/>
    </location>
</feature>
<feature type="transmembrane region" description="Helical" evidence="2">
    <location>
        <begin position="309"/>
        <end position="325"/>
    </location>
</feature>
<feature type="transmembrane region" description="Helical" evidence="2">
    <location>
        <begin position="334"/>
        <end position="354"/>
    </location>
</feature>
<feature type="transmembrane region" description="Helical" evidence="2">
    <location>
        <begin position="414"/>
        <end position="434"/>
    </location>
</feature>
<feature type="transmembrane region" description="Helical" evidence="2">
    <location>
        <begin position="449"/>
        <end position="469"/>
    </location>
</feature>
<feature type="transmembrane region" description="Helical" evidence="2">
    <location>
        <begin position="491"/>
        <end position="511"/>
    </location>
</feature>
<feature type="region of interest" description="Disordered" evidence="3">
    <location>
        <begin position="1"/>
        <end position="22"/>
    </location>
</feature>
<feature type="splice variant" id="VSP_029628" description="In isoform 2." evidence="5">
    <location>
        <begin position="1"/>
        <end position="590"/>
    </location>
</feature>
<feature type="sequence variant" id="VAR_037332" description="In dbSNP:rs1637696.">
    <original>G</original>
    <variation>V</variation>
    <location>
        <position position="502"/>
    </location>
</feature>
<proteinExistence type="evidence at protein level"/>
<sequence length="675" mass="77319">MEGRPPPEGRPPPRPRTGRAPRGRRRAVFAAVLHWSHITHLFENDRHFSHLSTLEREMAFRTEMGLYYSYFKTIVEAPSFLNGVWMIMNDKLTEYPLVINTLKRFNLYPEVILASWYRIYTKIMDLIGIQTKICWTVTRGEGLSPIESCEGLGDPACFYVAVIFILNGLMMALFFIYGTYLSGSRLGGLVTVLCFFFNHGECTRVMWTPPLRESFSYPFLVLQMLLVTHILRATKLYRGSLIALCISNVFFMLPWQFAQFVLLTQIASLFAVYVVGYIDICKLRKIIYIHMISLALCFVLMFGNSMLLTSYYASSLVIIWGILAMKPHFLKINVSELSLWVIQGCFWLFGTVILKYLTSKIFGIADDAHIGNLLTSKFFSYKDFDTLLYTCAAEFDFMEKETPLRYTKTLLLPVVLVVFVAIVRKIISDMWGVLAKQQTHVRKHQFDHGELVYHALQLLAYTALGILIMRLKLFLTPHMCVMASLICSRQLFGWLFCKVHPGAIVFAILAAMSIQGSANLQTQWNIVGEFSNLPQEELIEWIKYSTKPDAVFAGAMPTMASVKLSALRPIVNHPHYEDAGLRARTKIVYSMYSRKAAEEVKRELIKLKVNYYILEESWCVRRSKPGCSMPEIWDVEDPANAGKTPLCNLLVKDSKPHFTTVFQNSVYKVLEVVKE</sequence>
<comment type="function">
    <text evidence="1">C-mannosyltransferase that mediates the C-mannosylation tryptophan residues on target proteins. The reaction occurs on the luminal side of the endoplasmic reticulum and involves the transfer of a mannose unit from a dolichylphosphate mannose (Dol-P-Man) donor to an acceptor protein containing a WxxW consensus sequence (By similarity). C-mannosylates the first two tryptophans in the WxxWxxWxxC motif in thrombospondin (TSP) type-1 of UNC5A (By similarity). Regulates neurite extension during development (By similarity).</text>
</comment>
<comment type="catalytic activity">
    <reaction evidence="1">
        <text>L-tryptophyl-[protein] + a di-trans,poly-cis-dolichyl beta-D-mannosyl phosphate = C-alpha-D-mannosyl-L-tryptophyl-[protein] + a di-trans,poly-cis-dolichyl phosphate + H(+)</text>
        <dbReference type="Rhea" id="RHEA:77219"/>
        <dbReference type="Rhea" id="RHEA-COMP:15365"/>
        <dbReference type="Rhea" id="RHEA-COMP:18864"/>
        <dbReference type="Rhea" id="RHEA-COMP:19498"/>
        <dbReference type="Rhea" id="RHEA-COMP:19501"/>
        <dbReference type="ChEBI" id="CHEBI:15378"/>
        <dbReference type="ChEBI" id="CHEBI:29954"/>
        <dbReference type="ChEBI" id="CHEBI:57683"/>
        <dbReference type="ChEBI" id="CHEBI:58211"/>
        <dbReference type="ChEBI" id="CHEBI:195646"/>
    </reaction>
    <physiologicalReaction direction="left-to-right" evidence="1">
        <dbReference type="Rhea" id="RHEA:77220"/>
    </physiologicalReaction>
</comment>
<comment type="pathway">
    <text evidence="1">Protein modification; protein glycosylation.</text>
</comment>
<comment type="subcellular location">
    <subcellularLocation>
        <location evidence="1">Endoplasmic reticulum membrane</location>
        <topology evidence="2">Multi-pass membrane protein</topology>
    </subcellularLocation>
</comment>
<comment type="alternative products">
    <event type="alternative splicing"/>
    <isoform>
        <id>Q2PZI1-1</id>
        <name>1</name>
        <sequence type="displayed"/>
    </isoform>
    <isoform>
        <id>Q2PZI1-2</id>
        <name>2</name>
        <sequence type="described" ref="VSP_029628"/>
    </isoform>
</comment>
<comment type="tissue specificity">
    <text evidence="4">Widely expressed.</text>
</comment>
<comment type="similarity">
    <text evidence="6">Belongs to the dpy-19 family.</text>
</comment>
<keyword id="KW-0025">Alternative splicing</keyword>
<keyword id="KW-0256">Endoplasmic reticulum</keyword>
<keyword id="KW-0328">Glycosyltransferase</keyword>
<keyword id="KW-0472">Membrane</keyword>
<keyword id="KW-1267">Proteomics identification</keyword>
<keyword id="KW-1185">Reference proteome</keyword>
<keyword id="KW-0808">Transferase</keyword>
<keyword id="KW-0812">Transmembrane</keyword>
<keyword id="KW-1133">Transmembrane helix</keyword>
<accession>Q2PZI1</accession>
<accession>O94954</accession>
<accession>Q4G151</accession>